<keyword id="KW-0396">Initiation factor</keyword>
<keyword id="KW-0648">Protein biosynthesis</keyword>
<keyword id="KW-1185">Reference proteome</keyword>
<keyword id="KW-0694">RNA-binding</keyword>
<evidence type="ECO:0000255" key="1">
    <source>
        <dbReference type="HAMAP-Rule" id="MF_00231"/>
    </source>
</evidence>
<gene>
    <name evidence="1" type="primary">eif2a</name>
    <name type="ordered locus">MK0419</name>
</gene>
<accession>Q8TY86</accession>
<organism>
    <name type="scientific">Methanopyrus kandleri (strain AV19 / DSM 6324 / JCM 9639 / NBRC 100938)</name>
    <dbReference type="NCBI Taxonomy" id="190192"/>
    <lineage>
        <taxon>Archaea</taxon>
        <taxon>Methanobacteriati</taxon>
        <taxon>Methanobacteriota</taxon>
        <taxon>Methanomada group</taxon>
        <taxon>Methanopyri</taxon>
        <taxon>Methanopyrales</taxon>
        <taxon>Methanopyraceae</taxon>
        <taxon>Methanopyrus</taxon>
    </lineage>
</organism>
<comment type="function">
    <text evidence="1">eIF-2 functions in the early steps of protein synthesis by forming a ternary complex with GTP and initiator tRNA.</text>
</comment>
<comment type="subunit">
    <text evidence="1">Heterotrimer composed of an alpha, a beta and a gamma chain.</text>
</comment>
<comment type="similarity">
    <text evidence="1">Belongs to the eIF-2-alpha family.</text>
</comment>
<name>IF2A_METKA</name>
<protein>
    <recommendedName>
        <fullName evidence="1">Translation initiation factor 2 subunit alpha</fullName>
    </recommendedName>
    <alternativeName>
        <fullName evidence="1">aIF2-alpha</fullName>
    </alternativeName>
    <alternativeName>
        <fullName evidence="1">eIF-2-alpha</fullName>
    </alternativeName>
</protein>
<reference key="1">
    <citation type="journal article" date="2002" name="Proc. Natl. Acad. Sci. U.S.A.">
        <title>The complete genome of hyperthermophile Methanopyrus kandleri AV19 and monophyly of archaeal methanogens.</title>
        <authorList>
            <person name="Slesarev A.I."/>
            <person name="Mezhevaya K.V."/>
            <person name="Makarova K.S."/>
            <person name="Polushin N.N."/>
            <person name="Shcherbinina O.V."/>
            <person name="Shakhova V.V."/>
            <person name="Belova G.I."/>
            <person name="Aravind L."/>
            <person name="Natale D.A."/>
            <person name="Rogozin I.B."/>
            <person name="Tatusov R.L."/>
            <person name="Wolf Y.I."/>
            <person name="Stetter K.O."/>
            <person name="Malykh A.G."/>
            <person name="Koonin E.V."/>
            <person name="Kozyavkin S.A."/>
        </authorList>
    </citation>
    <scope>NUCLEOTIDE SEQUENCE [LARGE SCALE GENOMIC DNA]</scope>
    <source>
        <strain>AV19 / DSM 6324 / JCM 9639 / NBRC 100938</strain>
    </source>
</reference>
<feature type="chain" id="PRO_0000137395" description="Translation initiation factor 2 subunit alpha">
    <location>
        <begin position="1"/>
        <end position="267"/>
    </location>
</feature>
<feature type="domain" description="S1 motif" evidence="1">
    <location>
        <begin position="12"/>
        <end position="83"/>
    </location>
</feature>
<dbReference type="EMBL" id="AE009439">
    <property type="protein sequence ID" value="AAM01634.1"/>
    <property type="molecule type" value="Genomic_DNA"/>
</dbReference>
<dbReference type="RefSeq" id="WP_011018789.1">
    <property type="nucleotide sequence ID" value="NC_003551.1"/>
</dbReference>
<dbReference type="SMR" id="Q8TY86"/>
<dbReference type="FunCoup" id="Q8TY86">
    <property type="interactions" value="186"/>
</dbReference>
<dbReference type="STRING" id="190192.MK0419"/>
<dbReference type="PaxDb" id="190192-MK0419"/>
<dbReference type="EnsemblBacteria" id="AAM01634">
    <property type="protein sequence ID" value="AAM01634"/>
    <property type="gene ID" value="MK0419"/>
</dbReference>
<dbReference type="GeneID" id="1477722"/>
<dbReference type="KEGG" id="mka:MK0419"/>
<dbReference type="PATRIC" id="fig|190192.8.peg.448"/>
<dbReference type="HOGENOM" id="CLU_033458_0_2_2"/>
<dbReference type="InParanoid" id="Q8TY86"/>
<dbReference type="OrthoDB" id="84794at2157"/>
<dbReference type="Proteomes" id="UP000001826">
    <property type="component" value="Chromosome"/>
</dbReference>
<dbReference type="GO" id="GO:0043022">
    <property type="term" value="F:ribosome binding"/>
    <property type="evidence" value="ECO:0007669"/>
    <property type="project" value="TreeGrafter"/>
</dbReference>
<dbReference type="GO" id="GO:0003723">
    <property type="term" value="F:RNA binding"/>
    <property type="evidence" value="ECO:0007669"/>
    <property type="project" value="UniProtKB-UniRule"/>
</dbReference>
<dbReference type="GO" id="GO:0003743">
    <property type="term" value="F:translation initiation factor activity"/>
    <property type="evidence" value="ECO:0007669"/>
    <property type="project" value="UniProtKB-UniRule"/>
</dbReference>
<dbReference type="CDD" id="cd04452">
    <property type="entry name" value="S1_IF2_alpha"/>
    <property type="match status" value="1"/>
</dbReference>
<dbReference type="FunFam" id="2.40.50.140:FF:000015">
    <property type="entry name" value="Eukaryotic translation initiation factor 2 subunit alpha"/>
    <property type="match status" value="1"/>
</dbReference>
<dbReference type="FunFam" id="1.10.150.190:FF:000006">
    <property type="entry name" value="Translation initiation factor 2 subunit alpha"/>
    <property type="match status" value="1"/>
</dbReference>
<dbReference type="FunFam" id="3.30.70.1130:FF:000002">
    <property type="entry name" value="Translation initiation factor 2 subunit alpha"/>
    <property type="match status" value="1"/>
</dbReference>
<dbReference type="Gene3D" id="3.30.70.1130">
    <property type="entry name" value="EIF_2_alpha"/>
    <property type="match status" value="1"/>
</dbReference>
<dbReference type="Gene3D" id="2.40.50.140">
    <property type="entry name" value="Nucleic acid-binding proteins"/>
    <property type="match status" value="1"/>
</dbReference>
<dbReference type="Gene3D" id="1.10.150.190">
    <property type="entry name" value="Translation initiation factor 2, subunit 1, domain 2"/>
    <property type="match status" value="1"/>
</dbReference>
<dbReference type="HAMAP" id="MF_00231">
    <property type="entry name" value="eIF_2_alpha"/>
    <property type="match status" value="1"/>
</dbReference>
<dbReference type="InterPro" id="IPR012340">
    <property type="entry name" value="NA-bd_OB-fold"/>
</dbReference>
<dbReference type="InterPro" id="IPR003029">
    <property type="entry name" value="S1_domain"/>
</dbReference>
<dbReference type="InterPro" id="IPR044126">
    <property type="entry name" value="S1_IF2_alpha"/>
</dbReference>
<dbReference type="InterPro" id="IPR022964">
    <property type="entry name" value="TIF2_asu_arc"/>
</dbReference>
<dbReference type="InterPro" id="IPR024055">
    <property type="entry name" value="TIF2_asu_C"/>
</dbReference>
<dbReference type="InterPro" id="IPR024054">
    <property type="entry name" value="TIF2_asu_middle_sf"/>
</dbReference>
<dbReference type="InterPro" id="IPR011488">
    <property type="entry name" value="TIF_2_asu"/>
</dbReference>
<dbReference type="NCBIfam" id="NF003062">
    <property type="entry name" value="PRK03987.1-1"/>
    <property type="match status" value="1"/>
</dbReference>
<dbReference type="NCBIfam" id="NF003064">
    <property type="entry name" value="PRK03987.1-4"/>
    <property type="match status" value="1"/>
</dbReference>
<dbReference type="PANTHER" id="PTHR10602">
    <property type="entry name" value="EUKARYOTIC TRANSLATION INITIATION FACTOR 2 SUBUNIT 1"/>
    <property type="match status" value="1"/>
</dbReference>
<dbReference type="PANTHER" id="PTHR10602:SF0">
    <property type="entry name" value="EUKARYOTIC TRANSLATION INITIATION FACTOR 2 SUBUNIT 1"/>
    <property type="match status" value="1"/>
</dbReference>
<dbReference type="Pfam" id="PF07541">
    <property type="entry name" value="EIF_2_alpha"/>
    <property type="match status" value="1"/>
</dbReference>
<dbReference type="Pfam" id="PF00575">
    <property type="entry name" value="S1"/>
    <property type="match status" value="1"/>
</dbReference>
<dbReference type="SMART" id="SM00316">
    <property type="entry name" value="S1"/>
    <property type="match status" value="1"/>
</dbReference>
<dbReference type="SUPFAM" id="SSF110993">
    <property type="entry name" value="eIF-2-alpha, C-terminal domain"/>
    <property type="match status" value="1"/>
</dbReference>
<dbReference type="SUPFAM" id="SSF116742">
    <property type="entry name" value="eIF2alpha middle domain-like"/>
    <property type="match status" value="1"/>
</dbReference>
<dbReference type="SUPFAM" id="SSF50249">
    <property type="entry name" value="Nucleic acid-binding proteins"/>
    <property type="match status" value="1"/>
</dbReference>
<dbReference type="PROSITE" id="PS50126">
    <property type="entry name" value="S1"/>
    <property type="match status" value="1"/>
</dbReference>
<proteinExistence type="inferred from homology"/>
<sequence length="267" mass="30400">MPRKLRDLPEEGEIVMATVERVEDHGAFVTLDEYPGVDGYIHISEVASGWVKNIRDYVKEGQKVVAKVIRVNPKRKYANLSLRKVTDHQRKEKLKEWKREQRAEKLLEMAAEELGKDLDEAYEEAGYKLIEEYGSLYDALERAAAEEGPEPLLKAGVPEEWAEKLAELAIENIEPGRVKIEAYVDLTCPAPNGVEIIREALEKIEEFQQGDVKMEVQYVGAPRYRITVDAPDYRTAEKMVRKAAQAAIDHVEEHGGEGEFHREIEEG</sequence>